<feature type="chain" id="PRO_0000177653" description="Peptide chain release factor 1">
    <location>
        <begin position="1"/>
        <end position="356"/>
    </location>
</feature>
<feature type="region of interest" description="Disordered" evidence="2">
    <location>
        <begin position="279"/>
        <end position="299"/>
    </location>
</feature>
<feature type="compositionally biased region" description="Basic and acidic residues" evidence="2">
    <location>
        <begin position="279"/>
        <end position="289"/>
    </location>
</feature>
<feature type="modified residue" description="N5-methylglutamine" evidence="1">
    <location>
        <position position="230"/>
    </location>
</feature>
<keyword id="KW-0963">Cytoplasm</keyword>
<keyword id="KW-0488">Methylation</keyword>
<keyword id="KW-0648">Protein biosynthesis</keyword>
<keyword id="KW-1185">Reference proteome</keyword>
<reference key="1">
    <citation type="journal article" date="2001" name="Proc. Natl. Acad. Sci. U.S.A.">
        <title>Complete genome sequence of Caulobacter crescentus.</title>
        <authorList>
            <person name="Nierman W.C."/>
            <person name="Feldblyum T.V."/>
            <person name="Laub M.T."/>
            <person name="Paulsen I.T."/>
            <person name="Nelson K.E."/>
            <person name="Eisen J.A."/>
            <person name="Heidelberg J.F."/>
            <person name="Alley M.R.K."/>
            <person name="Ohta N."/>
            <person name="Maddock J.R."/>
            <person name="Potocka I."/>
            <person name="Nelson W.C."/>
            <person name="Newton A."/>
            <person name="Stephens C."/>
            <person name="Phadke N.D."/>
            <person name="Ely B."/>
            <person name="DeBoy R.T."/>
            <person name="Dodson R.J."/>
            <person name="Durkin A.S."/>
            <person name="Gwinn M.L."/>
            <person name="Haft D.H."/>
            <person name="Kolonay J.F."/>
            <person name="Smit J."/>
            <person name="Craven M.B."/>
            <person name="Khouri H.M."/>
            <person name="Shetty J."/>
            <person name="Berry K.J."/>
            <person name="Utterback T.R."/>
            <person name="Tran K."/>
            <person name="Wolf A.M."/>
            <person name="Vamathevan J.J."/>
            <person name="Ermolaeva M.D."/>
            <person name="White O."/>
            <person name="Salzberg S.L."/>
            <person name="Venter J.C."/>
            <person name="Shapiro L."/>
            <person name="Fraser C.M."/>
        </authorList>
    </citation>
    <scope>NUCLEOTIDE SEQUENCE [LARGE SCALE GENOMIC DNA]</scope>
    <source>
        <strain>ATCC 19089 / CIP 103742 / CB 15</strain>
    </source>
</reference>
<protein>
    <recommendedName>
        <fullName>Peptide chain release factor 1</fullName>
        <shortName>RF-1</shortName>
    </recommendedName>
</protein>
<dbReference type="EMBL" id="AE005673">
    <property type="protein sequence ID" value="AAK22841.1"/>
    <property type="status" value="ALT_INIT"/>
    <property type="molecule type" value="Genomic_DNA"/>
</dbReference>
<dbReference type="PIR" id="E87355">
    <property type="entry name" value="E87355"/>
</dbReference>
<dbReference type="RefSeq" id="NP_419673.1">
    <property type="nucleotide sequence ID" value="NC_002696.2"/>
</dbReference>
<dbReference type="RefSeq" id="WP_024265638.1">
    <property type="nucleotide sequence ID" value="NC_002696.2"/>
</dbReference>
<dbReference type="SMR" id="Q9A9V5"/>
<dbReference type="STRING" id="190650.CC_0856"/>
<dbReference type="EnsemblBacteria" id="AAK22841">
    <property type="protein sequence ID" value="AAK22841"/>
    <property type="gene ID" value="CC_0856"/>
</dbReference>
<dbReference type="KEGG" id="ccr:CC_0856"/>
<dbReference type="PATRIC" id="fig|190650.5.peg.869"/>
<dbReference type="eggNOG" id="COG0216">
    <property type="taxonomic scope" value="Bacteria"/>
</dbReference>
<dbReference type="HOGENOM" id="CLU_036856_0_1_5"/>
<dbReference type="Proteomes" id="UP000001816">
    <property type="component" value="Chromosome"/>
</dbReference>
<dbReference type="GO" id="GO:0005737">
    <property type="term" value="C:cytoplasm"/>
    <property type="evidence" value="ECO:0007669"/>
    <property type="project" value="UniProtKB-SubCell"/>
</dbReference>
<dbReference type="GO" id="GO:0016149">
    <property type="term" value="F:translation release factor activity, codon specific"/>
    <property type="evidence" value="ECO:0007669"/>
    <property type="project" value="UniProtKB-UniRule"/>
</dbReference>
<dbReference type="FunFam" id="3.30.160.20:FF:000004">
    <property type="entry name" value="Peptide chain release factor 1"/>
    <property type="match status" value="1"/>
</dbReference>
<dbReference type="FunFam" id="3.30.70.1660:FF:000002">
    <property type="entry name" value="Peptide chain release factor 1"/>
    <property type="match status" value="1"/>
</dbReference>
<dbReference type="FunFam" id="3.30.70.1660:FF:000004">
    <property type="entry name" value="Peptide chain release factor 1"/>
    <property type="match status" value="1"/>
</dbReference>
<dbReference type="Gene3D" id="3.30.160.20">
    <property type="match status" value="1"/>
</dbReference>
<dbReference type="Gene3D" id="3.30.70.1660">
    <property type="match status" value="1"/>
</dbReference>
<dbReference type="Gene3D" id="6.10.140.1950">
    <property type="match status" value="1"/>
</dbReference>
<dbReference type="HAMAP" id="MF_00093">
    <property type="entry name" value="Rel_fac_1"/>
    <property type="match status" value="1"/>
</dbReference>
<dbReference type="InterPro" id="IPR005139">
    <property type="entry name" value="PCRF"/>
</dbReference>
<dbReference type="InterPro" id="IPR000352">
    <property type="entry name" value="Pep_chain_release_fac_I"/>
</dbReference>
<dbReference type="InterPro" id="IPR045853">
    <property type="entry name" value="Pep_chain_release_fac_I_sf"/>
</dbReference>
<dbReference type="InterPro" id="IPR050057">
    <property type="entry name" value="Prokaryotic/Mito_RF"/>
</dbReference>
<dbReference type="InterPro" id="IPR004373">
    <property type="entry name" value="RF-1"/>
</dbReference>
<dbReference type="NCBIfam" id="TIGR00019">
    <property type="entry name" value="prfA"/>
    <property type="match status" value="1"/>
</dbReference>
<dbReference type="NCBIfam" id="NF001859">
    <property type="entry name" value="PRK00591.1"/>
    <property type="match status" value="1"/>
</dbReference>
<dbReference type="PANTHER" id="PTHR43804">
    <property type="entry name" value="LD18447P"/>
    <property type="match status" value="1"/>
</dbReference>
<dbReference type="PANTHER" id="PTHR43804:SF7">
    <property type="entry name" value="LD18447P"/>
    <property type="match status" value="1"/>
</dbReference>
<dbReference type="Pfam" id="PF03462">
    <property type="entry name" value="PCRF"/>
    <property type="match status" value="1"/>
</dbReference>
<dbReference type="Pfam" id="PF00472">
    <property type="entry name" value="RF-1"/>
    <property type="match status" value="1"/>
</dbReference>
<dbReference type="SMART" id="SM00937">
    <property type="entry name" value="PCRF"/>
    <property type="match status" value="1"/>
</dbReference>
<dbReference type="SUPFAM" id="SSF75620">
    <property type="entry name" value="Release factor"/>
    <property type="match status" value="1"/>
</dbReference>
<dbReference type="PROSITE" id="PS00745">
    <property type="entry name" value="RF_PROK_I"/>
    <property type="match status" value="1"/>
</dbReference>
<proteinExistence type="inferred from homology"/>
<organism>
    <name type="scientific">Caulobacter vibrioides (strain ATCC 19089 / CIP 103742 / CB 15)</name>
    <name type="common">Caulobacter crescentus</name>
    <dbReference type="NCBI Taxonomy" id="190650"/>
    <lineage>
        <taxon>Bacteria</taxon>
        <taxon>Pseudomonadati</taxon>
        <taxon>Pseudomonadota</taxon>
        <taxon>Alphaproteobacteria</taxon>
        <taxon>Caulobacterales</taxon>
        <taxon>Caulobacteraceae</taxon>
        <taxon>Caulobacter</taxon>
    </lineage>
</organism>
<accession>Q9A9V5</accession>
<gene>
    <name type="primary">prfA</name>
    <name type="ordered locus">CC_0856</name>
</gene>
<comment type="function">
    <text evidence="1">Peptide chain release factor 1 directs the termination of translation in response to the peptide chain termination codons UAG and UAA.</text>
</comment>
<comment type="subcellular location">
    <subcellularLocation>
        <location evidence="1">Cytoplasm</location>
    </subcellularLocation>
</comment>
<comment type="PTM">
    <text evidence="1">Methylated by PrmC. Methylation increases the termination efficiency of RF1 (By similarity).</text>
</comment>
<comment type="similarity">
    <text evidence="3">Belongs to the prokaryotic/mitochondrial release factor family.</text>
</comment>
<comment type="sequence caution" evidence="3">
    <conflict type="erroneous initiation">
        <sequence resource="EMBL-CDS" id="AAK22841"/>
    </conflict>
</comment>
<name>RF1_CAUVC</name>
<sequence length="356" mass="39460">MRLPQARLDQVLDRFREVEARMGAATDGAEIVKLSKEHAELRPVAEAVERLAKLSAERAELDVMASDPEMAEMVRDEIQALDEKLPVMERELALMLAPKDKDENASAILEVRAGTGGDEAALFAGDLFRMYQRYAQTQGWRVEIDSISEGEMGGFKEIVASITGDGVFGRLKFESGVHRVQRVPATEAQGRIHTSAATVAVLPEAEDVEIEIKESDLRIDTYRSSGAGGQHVNKTDSAVRITHLPTGVVVTSSEKSQHQNRARAMKNLKARLYDMQREALDSARSEARKSQVGSGDRSERIRTYNFPQGRVTDHRINLTLYNLARIMEGDALDDVINPLIAEDQAERLASLEESFS</sequence>
<evidence type="ECO:0000250" key="1"/>
<evidence type="ECO:0000256" key="2">
    <source>
        <dbReference type="SAM" id="MobiDB-lite"/>
    </source>
</evidence>
<evidence type="ECO:0000305" key="3"/>